<name>SYFA_PSEF5</name>
<feature type="chain" id="PRO_0000232012" description="Phenylalanine--tRNA ligase alpha subunit">
    <location>
        <begin position="1"/>
        <end position="338"/>
    </location>
</feature>
<feature type="binding site" evidence="1">
    <location>
        <position position="252"/>
    </location>
    <ligand>
        <name>Mg(2+)</name>
        <dbReference type="ChEBI" id="CHEBI:18420"/>
        <note>shared with beta subunit</note>
    </ligand>
</feature>
<gene>
    <name evidence="1" type="primary">pheS</name>
    <name type="ordered locus">PFL_2115</name>
</gene>
<dbReference type="EC" id="6.1.1.20" evidence="1"/>
<dbReference type="EMBL" id="CP000076">
    <property type="protein sequence ID" value="AAY91390.1"/>
    <property type="molecule type" value="Genomic_DNA"/>
</dbReference>
<dbReference type="RefSeq" id="WP_011060419.1">
    <property type="nucleotide sequence ID" value="NC_004129.6"/>
</dbReference>
<dbReference type="SMR" id="Q4KEW0"/>
<dbReference type="STRING" id="220664.PFL_2115"/>
<dbReference type="GeneID" id="57475157"/>
<dbReference type="KEGG" id="pfl:PFL_2115"/>
<dbReference type="eggNOG" id="COG0016">
    <property type="taxonomic scope" value="Bacteria"/>
</dbReference>
<dbReference type="HOGENOM" id="CLU_025086_0_1_6"/>
<dbReference type="Proteomes" id="UP000008540">
    <property type="component" value="Chromosome"/>
</dbReference>
<dbReference type="GO" id="GO:0005737">
    <property type="term" value="C:cytoplasm"/>
    <property type="evidence" value="ECO:0007669"/>
    <property type="project" value="UniProtKB-SubCell"/>
</dbReference>
<dbReference type="GO" id="GO:0005524">
    <property type="term" value="F:ATP binding"/>
    <property type="evidence" value="ECO:0007669"/>
    <property type="project" value="UniProtKB-UniRule"/>
</dbReference>
<dbReference type="GO" id="GO:0000287">
    <property type="term" value="F:magnesium ion binding"/>
    <property type="evidence" value="ECO:0007669"/>
    <property type="project" value="UniProtKB-UniRule"/>
</dbReference>
<dbReference type="GO" id="GO:0004826">
    <property type="term" value="F:phenylalanine-tRNA ligase activity"/>
    <property type="evidence" value="ECO:0007669"/>
    <property type="project" value="UniProtKB-UniRule"/>
</dbReference>
<dbReference type="GO" id="GO:0000049">
    <property type="term" value="F:tRNA binding"/>
    <property type="evidence" value="ECO:0007669"/>
    <property type="project" value="InterPro"/>
</dbReference>
<dbReference type="GO" id="GO:0006432">
    <property type="term" value="P:phenylalanyl-tRNA aminoacylation"/>
    <property type="evidence" value="ECO:0007669"/>
    <property type="project" value="UniProtKB-UniRule"/>
</dbReference>
<dbReference type="CDD" id="cd00496">
    <property type="entry name" value="PheRS_alpha_core"/>
    <property type="match status" value="1"/>
</dbReference>
<dbReference type="FunFam" id="3.30.930.10:FF:000003">
    <property type="entry name" value="Phenylalanine--tRNA ligase alpha subunit"/>
    <property type="match status" value="1"/>
</dbReference>
<dbReference type="Gene3D" id="3.30.930.10">
    <property type="entry name" value="Bira Bifunctional Protein, Domain 2"/>
    <property type="match status" value="1"/>
</dbReference>
<dbReference type="HAMAP" id="MF_00281">
    <property type="entry name" value="Phe_tRNA_synth_alpha1"/>
    <property type="match status" value="1"/>
</dbReference>
<dbReference type="InterPro" id="IPR006195">
    <property type="entry name" value="aa-tRNA-synth_II"/>
</dbReference>
<dbReference type="InterPro" id="IPR045864">
    <property type="entry name" value="aa-tRNA-synth_II/BPL/LPL"/>
</dbReference>
<dbReference type="InterPro" id="IPR004529">
    <property type="entry name" value="Phe-tRNA-synth_IIc_asu"/>
</dbReference>
<dbReference type="InterPro" id="IPR004188">
    <property type="entry name" value="Phe-tRNA_ligase_II_N"/>
</dbReference>
<dbReference type="InterPro" id="IPR022911">
    <property type="entry name" value="Phe_tRNA_ligase_alpha1_bac"/>
</dbReference>
<dbReference type="InterPro" id="IPR002319">
    <property type="entry name" value="Phenylalanyl-tRNA_Synthase"/>
</dbReference>
<dbReference type="InterPro" id="IPR010978">
    <property type="entry name" value="tRNA-bd_arm"/>
</dbReference>
<dbReference type="NCBIfam" id="TIGR00468">
    <property type="entry name" value="pheS"/>
    <property type="match status" value="1"/>
</dbReference>
<dbReference type="PANTHER" id="PTHR11538:SF41">
    <property type="entry name" value="PHENYLALANINE--TRNA LIGASE, MITOCHONDRIAL"/>
    <property type="match status" value="1"/>
</dbReference>
<dbReference type="PANTHER" id="PTHR11538">
    <property type="entry name" value="PHENYLALANYL-TRNA SYNTHETASE"/>
    <property type="match status" value="1"/>
</dbReference>
<dbReference type="Pfam" id="PF02912">
    <property type="entry name" value="Phe_tRNA-synt_N"/>
    <property type="match status" value="1"/>
</dbReference>
<dbReference type="Pfam" id="PF01409">
    <property type="entry name" value="tRNA-synt_2d"/>
    <property type="match status" value="1"/>
</dbReference>
<dbReference type="SUPFAM" id="SSF55681">
    <property type="entry name" value="Class II aaRS and biotin synthetases"/>
    <property type="match status" value="1"/>
</dbReference>
<dbReference type="SUPFAM" id="SSF46589">
    <property type="entry name" value="tRNA-binding arm"/>
    <property type="match status" value="1"/>
</dbReference>
<dbReference type="PROSITE" id="PS50862">
    <property type="entry name" value="AA_TRNA_LIGASE_II"/>
    <property type="match status" value="1"/>
</dbReference>
<protein>
    <recommendedName>
        <fullName evidence="1">Phenylalanine--tRNA ligase alpha subunit</fullName>
        <ecNumber evidence="1">6.1.1.20</ecNumber>
    </recommendedName>
    <alternativeName>
        <fullName evidence="1">Phenylalanyl-tRNA synthetase alpha subunit</fullName>
        <shortName evidence="1">PheRS</shortName>
    </alternativeName>
</protein>
<accession>Q4KEW0</accession>
<proteinExistence type="inferred from homology"/>
<sequence>MENLDALVSQALEAVQHAEDINALEQIRVHFLGKKGELTQVMKTLGNLPAEERPQVGALINVAKERVTEVLNARKAAFEEAELSAKLAAECIDVTLPGRGQTSGGLHPITRTLERIEQFFTHIGYGIAEGPEVEDDYHNFEALNIPGHHPARSMHDTFYFNANMLLRTHTSPVQVRTMESQQPPIRIVCPGRVYRSDSDITHSPMFHQVEGLLVDRDINFADLKGTIEEFLRVFFEKELAVRFRPSYFPFTEPSAEVDMECVMCSGKGCRVCKQTGWLEVMGCGMVHPNVLRMSGIDPEEFQGFAFGMGAERLAMLRYGVNDLRLFFDNDLRFLAQFR</sequence>
<organism>
    <name type="scientific">Pseudomonas fluorescens (strain ATCC BAA-477 / NRRL B-23932 / Pf-5)</name>
    <dbReference type="NCBI Taxonomy" id="220664"/>
    <lineage>
        <taxon>Bacteria</taxon>
        <taxon>Pseudomonadati</taxon>
        <taxon>Pseudomonadota</taxon>
        <taxon>Gammaproteobacteria</taxon>
        <taxon>Pseudomonadales</taxon>
        <taxon>Pseudomonadaceae</taxon>
        <taxon>Pseudomonas</taxon>
    </lineage>
</organism>
<comment type="catalytic activity">
    <reaction evidence="1">
        <text>tRNA(Phe) + L-phenylalanine + ATP = L-phenylalanyl-tRNA(Phe) + AMP + diphosphate + H(+)</text>
        <dbReference type="Rhea" id="RHEA:19413"/>
        <dbReference type="Rhea" id="RHEA-COMP:9668"/>
        <dbReference type="Rhea" id="RHEA-COMP:9699"/>
        <dbReference type="ChEBI" id="CHEBI:15378"/>
        <dbReference type="ChEBI" id="CHEBI:30616"/>
        <dbReference type="ChEBI" id="CHEBI:33019"/>
        <dbReference type="ChEBI" id="CHEBI:58095"/>
        <dbReference type="ChEBI" id="CHEBI:78442"/>
        <dbReference type="ChEBI" id="CHEBI:78531"/>
        <dbReference type="ChEBI" id="CHEBI:456215"/>
        <dbReference type="EC" id="6.1.1.20"/>
    </reaction>
</comment>
<comment type="cofactor">
    <cofactor evidence="1">
        <name>Mg(2+)</name>
        <dbReference type="ChEBI" id="CHEBI:18420"/>
    </cofactor>
    <text evidence="1">Binds 2 magnesium ions per tetramer.</text>
</comment>
<comment type="subunit">
    <text evidence="1">Tetramer of two alpha and two beta subunits.</text>
</comment>
<comment type="subcellular location">
    <subcellularLocation>
        <location evidence="1">Cytoplasm</location>
    </subcellularLocation>
</comment>
<comment type="similarity">
    <text evidence="1">Belongs to the class-II aminoacyl-tRNA synthetase family. Phe-tRNA synthetase alpha subunit type 1 subfamily.</text>
</comment>
<keyword id="KW-0030">Aminoacyl-tRNA synthetase</keyword>
<keyword id="KW-0067">ATP-binding</keyword>
<keyword id="KW-0963">Cytoplasm</keyword>
<keyword id="KW-0436">Ligase</keyword>
<keyword id="KW-0460">Magnesium</keyword>
<keyword id="KW-0479">Metal-binding</keyword>
<keyword id="KW-0547">Nucleotide-binding</keyword>
<keyword id="KW-0648">Protein biosynthesis</keyword>
<evidence type="ECO:0000255" key="1">
    <source>
        <dbReference type="HAMAP-Rule" id="MF_00281"/>
    </source>
</evidence>
<reference key="1">
    <citation type="journal article" date="2005" name="Nat. Biotechnol.">
        <title>Complete genome sequence of the plant commensal Pseudomonas fluorescens Pf-5.</title>
        <authorList>
            <person name="Paulsen I.T."/>
            <person name="Press C.M."/>
            <person name="Ravel J."/>
            <person name="Kobayashi D.Y."/>
            <person name="Myers G.S.A."/>
            <person name="Mavrodi D.V."/>
            <person name="DeBoy R.T."/>
            <person name="Seshadri R."/>
            <person name="Ren Q."/>
            <person name="Madupu R."/>
            <person name="Dodson R.J."/>
            <person name="Durkin A.S."/>
            <person name="Brinkac L.M."/>
            <person name="Daugherty S.C."/>
            <person name="Sullivan S.A."/>
            <person name="Rosovitz M.J."/>
            <person name="Gwinn M.L."/>
            <person name="Zhou L."/>
            <person name="Schneider D.J."/>
            <person name="Cartinhour S.W."/>
            <person name="Nelson W.C."/>
            <person name="Weidman J."/>
            <person name="Watkins K."/>
            <person name="Tran K."/>
            <person name="Khouri H."/>
            <person name="Pierson E.A."/>
            <person name="Pierson L.S. III"/>
            <person name="Thomashow L.S."/>
            <person name="Loper J.E."/>
        </authorList>
    </citation>
    <scope>NUCLEOTIDE SEQUENCE [LARGE SCALE GENOMIC DNA]</scope>
    <source>
        <strain>ATCC BAA-477 / NRRL B-23932 / Pf-5</strain>
    </source>
</reference>